<proteinExistence type="inferred from homology"/>
<accession>Q46494</accession>
<reference key="1">
    <citation type="journal article" date="1997" name="Biochim. Biophys. Acta">
        <title>The signal recognition particle receptor alpha subunit of the hyperthermophilic archaeon Acidianus ambivalens exhibits an intrinsic GTP-hydrolyzing activity.</title>
        <authorList>
            <person name="Moll R."/>
            <person name="Schmidtke S."/>
            <person name="Petersen A."/>
            <person name="Schaefer G."/>
        </authorList>
    </citation>
    <scope>NUCLEOTIDE SEQUENCE [GENOMIC DNA]</scope>
    <source>
        <strain>Lei 10 / DSM 3772 / JCM 9191</strain>
    </source>
</reference>
<dbReference type="EMBL" id="X95989">
    <property type="protein sequence ID" value="CAA65235.1"/>
    <property type="molecule type" value="Genomic_DNA"/>
</dbReference>
<dbReference type="PIR" id="T48924">
    <property type="entry name" value="T48924"/>
</dbReference>
<dbReference type="SMR" id="Q46494"/>
<dbReference type="GO" id="GO:0005840">
    <property type="term" value="C:ribosome"/>
    <property type="evidence" value="ECO:0007669"/>
    <property type="project" value="InterPro"/>
</dbReference>
<dbReference type="GO" id="GO:0003735">
    <property type="term" value="F:structural constituent of ribosome"/>
    <property type="evidence" value="ECO:0007669"/>
    <property type="project" value="InterPro"/>
</dbReference>
<dbReference type="GO" id="GO:0003746">
    <property type="term" value="F:translation elongation factor activity"/>
    <property type="evidence" value="ECO:0007669"/>
    <property type="project" value="InterPro"/>
</dbReference>
<dbReference type="GO" id="GO:0006355">
    <property type="term" value="P:regulation of DNA-templated transcription"/>
    <property type="evidence" value="ECO:0007669"/>
    <property type="project" value="UniProtKB-UniRule"/>
</dbReference>
<dbReference type="GO" id="GO:0140673">
    <property type="term" value="P:transcription elongation-coupled chromatin remodeling"/>
    <property type="evidence" value="ECO:0007669"/>
    <property type="project" value="InterPro"/>
</dbReference>
<dbReference type="CDD" id="cd06091">
    <property type="entry name" value="KOW_NusG"/>
    <property type="match status" value="1"/>
</dbReference>
<dbReference type="CDD" id="cd09887">
    <property type="entry name" value="NGN_Arch"/>
    <property type="match status" value="1"/>
</dbReference>
<dbReference type="Gene3D" id="2.30.30.30">
    <property type="match status" value="1"/>
</dbReference>
<dbReference type="Gene3D" id="3.30.70.940">
    <property type="entry name" value="NusG, N-terminal domain"/>
    <property type="match status" value="1"/>
</dbReference>
<dbReference type="HAMAP" id="MF_00950">
    <property type="entry name" value="Spt5_arch"/>
    <property type="match status" value="1"/>
</dbReference>
<dbReference type="InterPro" id="IPR005824">
    <property type="entry name" value="KOW"/>
</dbReference>
<dbReference type="InterPro" id="IPR005100">
    <property type="entry name" value="NGN-domain"/>
</dbReference>
<dbReference type="InterPro" id="IPR006645">
    <property type="entry name" value="NGN-like_dom"/>
</dbReference>
<dbReference type="InterPro" id="IPR036735">
    <property type="entry name" value="NGN_dom_sf"/>
</dbReference>
<dbReference type="InterPro" id="IPR014722">
    <property type="entry name" value="Rib_uL2_dom2"/>
</dbReference>
<dbReference type="InterPro" id="IPR005825">
    <property type="entry name" value="Ribosomal_uL24_CS"/>
</dbReference>
<dbReference type="InterPro" id="IPR011590">
    <property type="entry name" value="Spt5_arc"/>
</dbReference>
<dbReference type="InterPro" id="IPR008991">
    <property type="entry name" value="Translation_prot_SH3-like_sf"/>
</dbReference>
<dbReference type="NCBIfam" id="TIGR00405">
    <property type="entry name" value="KOW_elon_Spt5"/>
    <property type="match status" value="1"/>
</dbReference>
<dbReference type="Pfam" id="PF00467">
    <property type="entry name" value="KOW"/>
    <property type="match status" value="1"/>
</dbReference>
<dbReference type="Pfam" id="PF03439">
    <property type="entry name" value="Spt5-NGN"/>
    <property type="match status" value="1"/>
</dbReference>
<dbReference type="SMART" id="SM00739">
    <property type="entry name" value="KOW"/>
    <property type="match status" value="1"/>
</dbReference>
<dbReference type="SMART" id="SM00738">
    <property type="entry name" value="NGN"/>
    <property type="match status" value="1"/>
</dbReference>
<dbReference type="SUPFAM" id="SSF50104">
    <property type="entry name" value="Translation proteins SH3-like domain"/>
    <property type="match status" value="1"/>
</dbReference>
<name>SPT5_ACIAM</name>
<gene>
    <name evidence="1" type="primary">spt5</name>
</gene>
<comment type="function">
    <text evidence="1">Stimulates transcription elongation.</text>
</comment>
<comment type="subunit">
    <text evidence="1">Heterodimer composed of Spt4 and Spt5. Interacts with RNA polymerase (RNAP).</text>
</comment>
<comment type="similarity">
    <text evidence="1">Belongs to the archaeal Spt5 family.</text>
</comment>
<organism>
    <name type="scientific">Acidianus ambivalens</name>
    <name type="common">Desulfurolobus ambivalens</name>
    <dbReference type="NCBI Taxonomy" id="2283"/>
    <lineage>
        <taxon>Archaea</taxon>
        <taxon>Thermoproteota</taxon>
        <taxon>Thermoprotei</taxon>
        <taxon>Sulfolobales</taxon>
        <taxon>Sulfolobaceae</taxon>
        <taxon>Acidianus</taxon>
    </lineage>
</organism>
<protein>
    <recommendedName>
        <fullName evidence="1">Transcription elongation factor Spt5</fullName>
    </recommendedName>
</protein>
<sequence length="152" mass="16417">MESKIRNYYAVKVTGGQEVSVGLMLEERAKTNNIPEIYSIIVPPGLKGYVIVEASGPHVVKLLIAGIRHVRGIAQGLVPKDHIVKMVSKKVTGPTIKEGDLVEVVSGPFRGMQAQVVKVTEGKGEVVLNILESAFPLQVTIPVDQVKPVKKT</sequence>
<evidence type="ECO:0000255" key="1">
    <source>
        <dbReference type="HAMAP-Rule" id="MF_00950"/>
    </source>
</evidence>
<feature type="chain" id="PRO_0000113976" description="Transcription elongation factor Spt5">
    <location>
        <begin position="1"/>
        <end position="152"/>
    </location>
</feature>
<feature type="domain" description="KOW" evidence="1">
    <location>
        <begin position="98"/>
        <end position="127"/>
    </location>
</feature>
<keyword id="KW-0804">Transcription</keyword>
<keyword id="KW-0805">Transcription regulation</keyword>